<gene>
    <name type="primary">melR</name>
    <name type="ordered locus">b4118</name>
    <name type="ordered locus">JW4079</name>
</gene>
<keyword id="KW-0010">Activator</keyword>
<keyword id="KW-0238">DNA-binding</keyword>
<keyword id="KW-1185">Reference proteome</keyword>
<keyword id="KW-0804">Transcription</keyword>
<keyword id="KW-0805">Transcription regulation</keyword>
<protein>
    <recommendedName>
        <fullName>Melibiose operon regulatory protein</fullName>
    </recommendedName>
</protein>
<proteinExistence type="evidence at protein level"/>
<evidence type="ECO:0000255" key="1">
    <source>
        <dbReference type="PROSITE-ProRule" id="PRU00593"/>
    </source>
</evidence>
<evidence type="ECO:0000269" key="2">
    <source>
    </source>
</evidence>
<evidence type="ECO:0000269" key="3">
    <source>
    </source>
</evidence>
<dbReference type="EMBL" id="M18425">
    <property type="status" value="NOT_ANNOTATED_CDS"/>
    <property type="molecule type" value="Genomic_DNA"/>
</dbReference>
<dbReference type="EMBL" id="U14003">
    <property type="protein sequence ID" value="AAA97018.1"/>
    <property type="molecule type" value="Genomic_DNA"/>
</dbReference>
<dbReference type="EMBL" id="U00096">
    <property type="protein sequence ID" value="AAC77079.1"/>
    <property type="molecule type" value="Genomic_DNA"/>
</dbReference>
<dbReference type="EMBL" id="AP009048">
    <property type="protein sequence ID" value="BAE78120.1"/>
    <property type="molecule type" value="Genomic_DNA"/>
</dbReference>
<dbReference type="PIR" id="A29625">
    <property type="entry name" value="RGECMB"/>
</dbReference>
<dbReference type="RefSeq" id="NP_418542.1">
    <property type="nucleotide sequence ID" value="NC_000913.3"/>
</dbReference>
<dbReference type="RefSeq" id="WP_001090758.1">
    <property type="nucleotide sequence ID" value="NZ_STEB01000014.1"/>
</dbReference>
<dbReference type="SMR" id="P0ACH8"/>
<dbReference type="BioGRID" id="4262686">
    <property type="interactions" value="182"/>
</dbReference>
<dbReference type="BioGRID" id="852929">
    <property type="interactions" value="5"/>
</dbReference>
<dbReference type="DIP" id="DIP-10181N"/>
<dbReference type="FunCoup" id="P0ACH8">
    <property type="interactions" value="30"/>
</dbReference>
<dbReference type="IntAct" id="P0ACH8">
    <property type="interactions" value="15"/>
</dbReference>
<dbReference type="STRING" id="511145.b4118"/>
<dbReference type="PaxDb" id="511145-b4118"/>
<dbReference type="EnsemblBacteria" id="AAC77079">
    <property type="protein sequence ID" value="AAC77079"/>
    <property type="gene ID" value="b4118"/>
</dbReference>
<dbReference type="GeneID" id="75204000"/>
<dbReference type="GeneID" id="948637"/>
<dbReference type="KEGG" id="ecj:JW4079"/>
<dbReference type="KEGG" id="eco:b4118"/>
<dbReference type="KEGG" id="ecoc:C3026_22250"/>
<dbReference type="PATRIC" id="fig|1411691.4.peg.2582"/>
<dbReference type="EchoBASE" id="EB1212"/>
<dbReference type="eggNOG" id="COG2169">
    <property type="taxonomic scope" value="Bacteria"/>
</dbReference>
<dbReference type="HOGENOM" id="CLU_000445_88_9_6"/>
<dbReference type="InParanoid" id="P0ACH8"/>
<dbReference type="OMA" id="MCLFWGG"/>
<dbReference type="OrthoDB" id="345413at2"/>
<dbReference type="PhylomeDB" id="P0ACH8"/>
<dbReference type="BioCyc" id="EcoCyc:PD00208"/>
<dbReference type="PRO" id="PR:P0ACH8"/>
<dbReference type="Proteomes" id="UP000000625">
    <property type="component" value="Chromosome"/>
</dbReference>
<dbReference type="GO" id="GO:0003677">
    <property type="term" value="F:DNA binding"/>
    <property type="evidence" value="ECO:0000314"/>
    <property type="project" value="EcoCyc"/>
</dbReference>
<dbReference type="GO" id="GO:0003700">
    <property type="term" value="F:DNA-binding transcription factor activity"/>
    <property type="evidence" value="ECO:0007669"/>
    <property type="project" value="InterPro"/>
</dbReference>
<dbReference type="GO" id="GO:0043565">
    <property type="term" value="F:sequence-specific DNA binding"/>
    <property type="evidence" value="ECO:0007669"/>
    <property type="project" value="InterPro"/>
</dbReference>
<dbReference type="GO" id="GO:0006355">
    <property type="term" value="P:regulation of DNA-templated transcription"/>
    <property type="evidence" value="ECO:0000314"/>
    <property type="project" value="EcoCyc"/>
</dbReference>
<dbReference type="CDD" id="cd06997">
    <property type="entry name" value="cupin_MelR-like_N"/>
    <property type="match status" value="1"/>
</dbReference>
<dbReference type="FunFam" id="1.10.10.60:FF:000175">
    <property type="entry name" value="Melibiose operon regulatory protein"/>
    <property type="match status" value="1"/>
</dbReference>
<dbReference type="FunFam" id="1.10.10.60:FF:000190">
    <property type="entry name" value="Melibiose operon regulatory protein"/>
    <property type="match status" value="1"/>
</dbReference>
<dbReference type="Gene3D" id="1.10.10.60">
    <property type="entry name" value="Homeodomain-like"/>
    <property type="match status" value="2"/>
</dbReference>
<dbReference type="Gene3D" id="2.60.120.10">
    <property type="entry name" value="Jelly Rolls"/>
    <property type="match status" value="1"/>
</dbReference>
<dbReference type="InterPro" id="IPR009057">
    <property type="entry name" value="Homeodomain-like_sf"/>
</dbReference>
<dbReference type="InterPro" id="IPR018060">
    <property type="entry name" value="HTH_AraC"/>
</dbReference>
<dbReference type="InterPro" id="IPR018062">
    <property type="entry name" value="HTH_AraC-typ_CS"/>
</dbReference>
<dbReference type="InterPro" id="IPR014710">
    <property type="entry name" value="RmlC-like_jellyroll"/>
</dbReference>
<dbReference type="InterPro" id="IPR011051">
    <property type="entry name" value="RmlC_Cupin_sf"/>
</dbReference>
<dbReference type="InterPro" id="IPR008917">
    <property type="entry name" value="TF_DNA-bd_sf"/>
</dbReference>
<dbReference type="InterPro" id="IPR020449">
    <property type="entry name" value="Tscrpt_reg_AraC-type_HTH"/>
</dbReference>
<dbReference type="NCBIfam" id="NF007693">
    <property type="entry name" value="PRK10371.1"/>
    <property type="match status" value="1"/>
</dbReference>
<dbReference type="PANTHER" id="PTHR43280">
    <property type="entry name" value="ARAC-FAMILY TRANSCRIPTIONAL REGULATOR"/>
    <property type="match status" value="1"/>
</dbReference>
<dbReference type="PANTHER" id="PTHR43280:SF14">
    <property type="entry name" value="MELIBIOSE OPERON REGULATORY PROTEIN"/>
    <property type="match status" value="1"/>
</dbReference>
<dbReference type="Pfam" id="PF12833">
    <property type="entry name" value="HTH_18"/>
    <property type="match status" value="1"/>
</dbReference>
<dbReference type="PRINTS" id="PR00032">
    <property type="entry name" value="HTHARAC"/>
</dbReference>
<dbReference type="SMART" id="SM00342">
    <property type="entry name" value="HTH_ARAC"/>
    <property type="match status" value="1"/>
</dbReference>
<dbReference type="SUPFAM" id="SSF47454">
    <property type="entry name" value="A DNA-binding domain in eukaryotic transcription factors"/>
    <property type="match status" value="1"/>
</dbReference>
<dbReference type="SUPFAM" id="SSF46689">
    <property type="entry name" value="Homeodomain-like"/>
    <property type="match status" value="1"/>
</dbReference>
<dbReference type="SUPFAM" id="SSF51182">
    <property type="entry name" value="RmlC-like cupins"/>
    <property type="match status" value="1"/>
</dbReference>
<dbReference type="PROSITE" id="PS00041">
    <property type="entry name" value="HTH_ARAC_FAMILY_1"/>
    <property type="match status" value="1"/>
</dbReference>
<dbReference type="PROSITE" id="PS01124">
    <property type="entry name" value="HTH_ARAC_FAMILY_2"/>
    <property type="match status" value="1"/>
</dbReference>
<comment type="function">
    <text evidence="3">Transcription activator for the expression of the melAB operon. MelR binds at two sites located upstream of the melAB transcription site.</text>
</comment>
<sequence length="302" mass="34928">MNTDTFMCSSDEKQTRSPLSLYSEYQRMEIEFRAPHIMPTSHWHGQVEVNVPFDGDVEYLINNEKVNINQGHITLFWACTPHQLTDTGTCQSMAIFNLPMHLFLSWPLDKDLINHVTHGMVIKSLATQQLSPFEVRRWQQELNSPNEQIRQLAIDEIGLMLKRFSLSGWEPILVNKTSRTHKNSVSRHAQFYVSQMLGFIAENYDQALTINDVAEHVKLNANYAMGIFQRVMQLTMKQYITAMRINHVRALLSDTDKSILDIALTAGFRSSSRFYSTFGKYVGMSPQQYRKLSQQRRQTFPG</sequence>
<organism>
    <name type="scientific">Escherichia coli (strain K12)</name>
    <dbReference type="NCBI Taxonomy" id="83333"/>
    <lineage>
        <taxon>Bacteria</taxon>
        <taxon>Pseudomonadati</taxon>
        <taxon>Pseudomonadota</taxon>
        <taxon>Gammaproteobacteria</taxon>
        <taxon>Enterobacterales</taxon>
        <taxon>Enterobacteriaceae</taxon>
        <taxon>Escherichia</taxon>
    </lineage>
</organism>
<accession>P0ACH8</accession>
<accession>P10411</accession>
<accession>Q2M6I6</accession>
<reference key="1">
    <citation type="journal article" date="1987" name="Gene">
        <title>Organisation of the regulatory region of the Escherichia coli melibiose operon.</title>
        <authorList>
            <person name="Webster C."/>
            <person name="Kempsell K."/>
            <person name="Booth I."/>
            <person name="Busby S."/>
        </authorList>
    </citation>
    <scope>NUCLEOTIDE SEQUENCE [GENOMIC DNA]</scope>
</reference>
<reference key="2">
    <citation type="journal article" date="1995" name="Nucleic Acids Res.">
        <title>Analysis of the Escherichia coli genome VI: DNA sequence of the region from 92.8 through 100 minutes.</title>
        <authorList>
            <person name="Burland V.D."/>
            <person name="Plunkett G. III"/>
            <person name="Sofia H.J."/>
            <person name="Daniels D.L."/>
            <person name="Blattner F.R."/>
        </authorList>
    </citation>
    <scope>NUCLEOTIDE SEQUENCE [LARGE SCALE GENOMIC DNA]</scope>
    <source>
        <strain>K12 / MG1655 / ATCC 47076</strain>
    </source>
</reference>
<reference key="3">
    <citation type="journal article" date="1997" name="Science">
        <title>The complete genome sequence of Escherichia coli K-12.</title>
        <authorList>
            <person name="Blattner F.R."/>
            <person name="Plunkett G. III"/>
            <person name="Bloch C.A."/>
            <person name="Perna N.T."/>
            <person name="Burland V."/>
            <person name="Riley M."/>
            <person name="Collado-Vides J."/>
            <person name="Glasner J.D."/>
            <person name="Rode C.K."/>
            <person name="Mayhew G.F."/>
            <person name="Gregor J."/>
            <person name="Davis N.W."/>
            <person name="Kirkpatrick H.A."/>
            <person name="Goeden M.A."/>
            <person name="Rose D.J."/>
            <person name="Mau B."/>
            <person name="Shao Y."/>
        </authorList>
    </citation>
    <scope>NUCLEOTIDE SEQUENCE [LARGE SCALE GENOMIC DNA]</scope>
    <source>
        <strain>K12 / MG1655 / ATCC 47076</strain>
    </source>
</reference>
<reference key="4">
    <citation type="journal article" date="2006" name="Mol. Syst. Biol.">
        <title>Highly accurate genome sequences of Escherichia coli K-12 strains MG1655 and W3110.</title>
        <authorList>
            <person name="Hayashi K."/>
            <person name="Morooka N."/>
            <person name="Yamamoto Y."/>
            <person name="Fujita K."/>
            <person name="Isono K."/>
            <person name="Choi S."/>
            <person name="Ohtsubo E."/>
            <person name="Baba T."/>
            <person name="Wanner B.L."/>
            <person name="Mori H."/>
            <person name="Horiuchi T."/>
        </authorList>
    </citation>
    <scope>NUCLEOTIDE SEQUENCE [LARGE SCALE GENOMIC DNA]</scope>
    <source>
        <strain>K12 / W3110 / ATCC 27325 / DSM 5911</strain>
    </source>
</reference>
<reference key="5">
    <citation type="journal article" date="1989" name="Gene">
        <title>The Escherichia coli melR gene encodes a DNA-binding protein with affinity for specific sequences located in the melibiose-operon regulatory region.</title>
        <authorList>
            <person name="Webster C."/>
            <person name="Gardner L."/>
            <person name="Busby S."/>
        </authorList>
    </citation>
    <scope>FUNCTION</scope>
</reference>
<reference key="6">
    <citation type="journal article" date="1992" name="Biochem. J.">
        <title>Overexpression, purification and characterization of the Escherichia coli MelR transcription activator protein.</title>
        <authorList>
            <person name="Caswell R."/>
            <person name="Williams J."/>
            <person name="Lyddiatt A."/>
            <person name="Busby S."/>
        </authorList>
    </citation>
    <scope>MUTAGENESIS</scope>
</reference>
<reference key="7">
    <citation type="journal article" date="1997" name="Nucleic Acids Res.">
        <title>DNA binding and DNA bending by the MelR transcription activator protein from Escherichia coli.</title>
        <authorList>
            <person name="Bourgerie S.J."/>
            <person name="Michan C.M."/>
            <person name="Thomas M.S."/>
            <person name="Busby S.J.W."/>
            <person name="Hyde E.I."/>
        </authorList>
    </citation>
    <scope>CHARACTERIZATION</scope>
</reference>
<feature type="chain" id="PRO_0000194537" description="Melibiose operon regulatory protein">
    <location>
        <begin position="1"/>
        <end position="302"/>
    </location>
</feature>
<feature type="domain" description="HTH araC/xylS-type" evidence="1">
    <location>
        <begin position="194"/>
        <end position="292"/>
    </location>
</feature>
<feature type="DNA-binding region" description="H-T-H motif" evidence="1">
    <location>
        <begin position="211"/>
        <end position="232"/>
    </location>
</feature>
<feature type="DNA-binding region" description="H-T-H motif" evidence="1">
    <location>
        <begin position="259"/>
        <end position="282"/>
    </location>
</feature>
<feature type="mutagenesis site" description="No effect." evidence="2">
    <original>N</original>
    <variation>A</variation>
    <location>
        <position position="222"/>
    </location>
</feature>
<feature type="mutagenesis site" description="No effect." evidence="2">
    <original>R</original>
    <variation>G</variation>
    <location>
        <position position="269"/>
    </location>
</feature>
<feature type="mutagenesis site" description="50% reduced activity." evidence="2">
    <original>S</original>
    <variation>A</variation>
    <location>
        <position position="271"/>
    </location>
</feature>
<feature type="mutagenesis site" description="75% reduced activity." evidence="2">
    <original>S</original>
    <variation>N</variation>
    <location>
        <position position="272"/>
    </location>
</feature>
<name>MELR_ECOLI</name>